<name>BAMA_SALPC</name>
<evidence type="ECO:0000255" key="1">
    <source>
        <dbReference type="HAMAP-Rule" id="MF_01430"/>
    </source>
</evidence>
<evidence type="ECO:0000255" key="2">
    <source>
        <dbReference type="PROSITE-ProRule" id="PRU01115"/>
    </source>
</evidence>
<gene>
    <name evidence="1" type="primary">bamA</name>
    <name type="synonym">yaeT</name>
    <name type="ordered locus">SPC_0240</name>
</gene>
<sequence length="805" mass="89485">MAMKKLLIASLLFSSATVYGAEGFVVKDIHFEGLQRVAVGAALLSMPVRTGDTVNDEDISNTIRALFATGNFEDVRVLRDGNTLLVQVKERPTIASITFSGNKSVKDDMLKQNLEASGVRVGESLDRTTLSDIEKGLEDFYYSVGKYSASVKAVVTPLPRNRVDLKLVFQEGVSAKIQQINIVGNHAFSTEELISHFQLRDEVPWWNVVGDRKYQKQKLAGDLETLRSYYLDRGYARFNIDSTQVSLTPDKKGIYITVNITEGDQYKLSGVQVSGNLAGHSAEIEKLTKIEPGELYNGTKVTKMEDDIKKLLGRYGYAYPRVQSQPEINDADKTVKLRVNVDAGNRFYVRKIRFEGNDTSKDSVLRREMRQMEGAWLGSDLVDQGKERLNRLGFFETVDTDTQRVPGSPDQVDVVYKVKERNTGSFNFGIGYGTESGVSFQAGVQQDNWLGTGYSVGINGTKNDYQTYSELSVTNPYFTVDGVSLGGRIFYNDFQADDADLSDYTNKSYGTDVTLGFPINEYNTLRAGLGYVHNKLSNMQPQIAMDRYLESMGQSADTSSFAADDFTFNYGWTYNKLDRGYFPTDGSRVNLTGKVTIPGSDNEYYKVSLDTATYVPIDNDHKWVVLGRTRWGYGDGLGGKEMPFYENFYAGGSSTVRGFQSNTIGPKAVYGYGAHTDPNDNNDDYEACTQSSGCKSDDAVGGNAMAVASLEFITPTPFISEKYANSVRTSFFWDMGTVWDTNWDPSSAPSDVPDYSDPGNIRMSAGIALQWMSPLGPLVFSYAQPFKKYDGDKAEQFQFNIGKTW</sequence>
<protein>
    <recommendedName>
        <fullName evidence="1">Outer membrane protein assembly factor BamA</fullName>
    </recommendedName>
</protein>
<organism>
    <name type="scientific">Salmonella paratyphi C (strain RKS4594)</name>
    <dbReference type="NCBI Taxonomy" id="476213"/>
    <lineage>
        <taxon>Bacteria</taxon>
        <taxon>Pseudomonadati</taxon>
        <taxon>Pseudomonadota</taxon>
        <taxon>Gammaproteobacteria</taxon>
        <taxon>Enterobacterales</taxon>
        <taxon>Enterobacteriaceae</taxon>
        <taxon>Salmonella</taxon>
    </lineage>
</organism>
<accession>C0Q6K0</accession>
<feature type="signal peptide" evidence="1">
    <location>
        <begin position="1"/>
        <end position="20"/>
    </location>
</feature>
<feature type="chain" id="PRO_1000184891" description="Outer membrane protein assembly factor BamA">
    <location>
        <begin position="21"/>
        <end position="805"/>
    </location>
</feature>
<feature type="domain" description="POTRA 1" evidence="2">
    <location>
        <begin position="24"/>
        <end position="91"/>
    </location>
</feature>
<feature type="domain" description="POTRA 2" evidence="2">
    <location>
        <begin position="92"/>
        <end position="172"/>
    </location>
</feature>
<feature type="domain" description="POTRA 3" evidence="2">
    <location>
        <begin position="175"/>
        <end position="263"/>
    </location>
</feature>
<feature type="domain" description="POTRA 4" evidence="2">
    <location>
        <begin position="266"/>
        <end position="344"/>
    </location>
</feature>
<feature type="domain" description="POTRA 5" evidence="2">
    <location>
        <begin position="347"/>
        <end position="421"/>
    </location>
</feature>
<reference key="1">
    <citation type="journal article" date="2009" name="PLoS ONE">
        <title>Salmonella paratyphi C: genetic divergence from Salmonella choleraesuis and pathogenic convergence with Salmonella typhi.</title>
        <authorList>
            <person name="Liu W.-Q."/>
            <person name="Feng Y."/>
            <person name="Wang Y."/>
            <person name="Zou Q.-H."/>
            <person name="Chen F."/>
            <person name="Guo J.-T."/>
            <person name="Peng Y.-H."/>
            <person name="Jin Y."/>
            <person name="Li Y.-G."/>
            <person name="Hu S.-N."/>
            <person name="Johnston R.N."/>
            <person name="Liu G.-R."/>
            <person name="Liu S.-L."/>
        </authorList>
    </citation>
    <scope>NUCLEOTIDE SEQUENCE [LARGE SCALE GENOMIC DNA]</scope>
    <source>
        <strain>RKS4594</strain>
    </source>
</reference>
<dbReference type="EMBL" id="CP000857">
    <property type="protein sequence ID" value="ACN44429.1"/>
    <property type="molecule type" value="Genomic_DNA"/>
</dbReference>
<dbReference type="RefSeq" id="WP_001240927.1">
    <property type="nucleotide sequence ID" value="NC_012125.1"/>
</dbReference>
<dbReference type="SMR" id="C0Q6K0"/>
<dbReference type="KEGG" id="sei:SPC_0240"/>
<dbReference type="HOGENOM" id="CLU_007664_1_0_6"/>
<dbReference type="Proteomes" id="UP000001599">
    <property type="component" value="Chromosome"/>
</dbReference>
<dbReference type="GO" id="GO:1990063">
    <property type="term" value="C:Bam protein complex"/>
    <property type="evidence" value="ECO:0007669"/>
    <property type="project" value="TreeGrafter"/>
</dbReference>
<dbReference type="GO" id="GO:0043165">
    <property type="term" value="P:Gram-negative-bacterium-type cell outer membrane assembly"/>
    <property type="evidence" value="ECO:0007669"/>
    <property type="project" value="UniProtKB-UniRule"/>
</dbReference>
<dbReference type="GO" id="GO:0051205">
    <property type="term" value="P:protein insertion into membrane"/>
    <property type="evidence" value="ECO:0007669"/>
    <property type="project" value="UniProtKB-UniRule"/>
</dbReference>
<dbReference type="FunFam" id="2.40.160.50:FF:000001">
    <property type="entry name" value="Outer membrane protein assembly factor BamA"/>
    <property type="match status" value="1"/>
</dbReference>
<dbReference type="FunFam" id="3.10.20.310:FF:000001">
    <property type="entry name" value="Outer membrane protein assembly factor BamA"/>
    <property type="match status" value="1"/>
</dbReference>
<dbReference type="FunFam" id="3.10.20.310:FF:000002">
    <property type="entry name" value="Outer membrane protein assembly factor BamA"/>
    <property type="match status" value="1"/>
</dbReference>
<dbReference type="FunFam" id="3.10.20.310:FF:000003">
    <property type="entry name" value="Outer membrane protein assembly factor BamA"/>
    <property type="match status" value="1"/>
</dbReference>
<dbReference type="FunFam" id="3.10.20.310:FF:000004">
    <property type="entry name" value="Outer membrane protein assembly factor BamA"/>
    <property type="match status" value="1"/>
</dbReference>
<dbReference type="FunFam" id="3.10.20.310:FF:000005">
    <property type="entry name" value="Outer membrane protein assembly factor BamA"/>
    <property type="match status" value="1"/>
</dbReference>
<dbReference type="Gene3D" id="3.10.20.310">
    <property type="entry name" value="membrane protein fhac"/>
    <property type="match status" value="5"/>
</dbReference>
<dbReference type="Gene3D" id="2.40.160.50">
    <property type="entry name" value="membrane protein fhac: a member of the omp85/tpsb transporter family"/>
    <property type="match status" value="1"/>
</dbReference>
<dbReference type="HAMAP" id="MF_01430">
    <property type="entry name" value="OM_assembly_BamA"/>
    <property type="match status" value="1"/>
</dbReference>
<dbReference type="InterPro" id="IPR000184">
    <property type="entry name" value="Bac_surfAg_D15"/>
</dbReference>
<dbReference type="InterPro" id="IPR010827">
    <property type="entry name" value="BamA/TamA_POTRA"/>
</dbReference>
<dbReference type="InterPro" id="IPR039910">
    <property type="entry name" value="D15-like"/>
</dbReference>
<dbReference type="InterPro" id="IPR023707">
    <property type="entry name" value="OM_assembly_BamA"/>
</dbReference>
<dbReference type="InterPro" id="IPR034746">
    <property type="entry name" value="POTRA"/>
</dbReference>
<dbReference type="NCBIfam" id="TIGR03303">
    <property type="entry name" value="OM_YaeT"/>
    <property type="match status" value="1"/>
</dbReference>
<dbReference type="NCBIfam" id="NF008287">
    <property type="entry name" value="PRK11067.1"/>
    <property type="match status" value="1"/>
</dbReference>
<dbReference type="PANTHER" id="PTHR12815:SF23">
    <property type="entry name" value="OUTER MEMBRANE PROTEIN ASSEMBLY FACTOR BAMA"/>
    <property type="match status" value="1"/>
</dbReference>
<dbReference type="PANTHER" id="PTHR12815">
    <property type="entry name" value="SORTING AND ASSEMBLY MACHINERY SAMM50 PROTEIN FAMILY MEMBER"/>
    <property type="match status" value="1"/>
</dbReference>
<dbReference type="Pfam" id="PF01103">
    <property type="entry name" value="Omp85"/>
    <property type="match status" value="1"/>
</dbReference>
<dbReference type="Pfam" id="PF07244">
    <property type="entry name" value="POTRA"/>
    <property type="match status" value="4"/>
</dbReference>
<dbReference type="PIRSF" id="PIRSF006076">
    <property type="entry name" value="OM_assembly_OMP85"/>
    <property type="match status" value="1"/>
</dbReference>
<dbReference type="PROSITE" id="PS51779">
    <property type="entry name" value="POTRA"/>
    <property type="match status" value="5"/>
</dbReference>
<comment type="function">
    <text evidence="1">Part of the outer membrane protein assembly complex, which is involved in assembly and insertion of beta-barrel proteins into the outer membrane. Constitutes, with BamD, the core component of the assembly machinery.</text>
</comment>
<comment type="subunit">
    <text evidence="1">Part of the Bam complex, which is composed of the outer membrane protein BamA, and four lipoproteins BamB, BamC, BamD and BamE.</text>
</comment>
<comment type="subcellular location">
    <subcellularLocation>
        <location evidence="1">Cell outer membrane</location>
    </subcellularLocation>
</comment>
<comment type="similarity">
    <text evidence="1">Belongs to the BamA family.</text>
</comment>
<keyword id="KW-0998">Cell outer membrane</keyword>
<keyword id="KW-0472">Membrane</keyword>
<keyword id="KW-0677">Repeat</keyword>
<keyword id="KW-0732">Signal</keyword>
<keyword id="KW-0812">Transmembrane</keyword>
<keyword id="KW-1134">Transmembrane beta strand</keyword>
<proteinExistence type="inferred from homology"/>